<accession>P34181</accession>
<protein>
    <recommendedName>
        <fullName>Prolactin</fullName>
        <shortName>PRL</shortName>
    </recommendedName>
</protein>
<evidence type="ECO:0000250" key="1"/>
<evidence type="ECO:0000305" key="2"/>
<comment type="subcellular location">
    <subcellularLocation>
        <location>Secreted</location>
    </subcellularLocation>
</comment>
<comment type="tissue specificity">
    <text>Pituitary gland.</text>
</comment>
<comment type="similarity">
    <text evidence="2">Belongs to the somatotropin/prolactin family.</text>
</comment>
<keyword id="KW-1015">Disulfide bond</keyword>
<keyword id="KW-0372">Hormone</keyword>
<keyword id="KW-0964">Secreted</keyword>
<keyword id="KW-0732">Signal</keyword>
<dbReference type="EMBL" id="Z23114">
    <property type="protein sequence ID" value="CAA80660.1"/>
    <property type="molecule type" value="mRNA"/>
</dbReference>
<dbReference type="EMBL" id="L23433">
    <property type="protein sequence ID" value="AAA51434.1"/>
    <property type="molecule type" value="mRNA"/>
</dbReference>
<dbReference type="PIR" id="S34351">
    <property type="entry name" value="S34351"/>
</dbReference>
<dbReference type="SMR" id="P34181"/>
<dbReference type="GO" id="GO:0005615">
    <property type="term" value="C:extracellular space"/>
    <property type="evidence" value="ECO:0007669"/>
    <property type="project" value="TreeGrafter"/>
</dbReference>
<dbReference type="GO" id="GO:0005179">
    <property type="term" value="F:hormone activity"/>
    <property type="evidence" value="ECO:0007669"/>
    <property type="project" value="UniProtKB-KW"/>
</dbReference>
<dbReference type="GO" id="GO:0005148">
    <property type="term" value="F:prolactin receptor binding"/>
    <property type="evidence" value="ECO:0000250"/>
    <property type="project" value="AgBase"/>
</dbReference>
<dbReference type="GO" id="GO:0016176">
    <property type="term" value="F:superoxide-generating NADPH oxidase activator activity"/>
    <property type="evidence" value="ECO:0000250"/>
    <property type="project" value="AgBase"/>
</dbReference>
<dbReference type="GO" id="GO:0007259">
    <property type="term" value="P:cell surface receptor signaling pathway via JAK-STAT"/>
    <property type="evidence" value="ECO:0000250"/>
    <property type="project" value="AgBase"/>
</dbReference>
<dbReference type="GO" id="GO:0010629">
    <property type="term" value="P:negative regulation of gene expression"/>
    <property type="evidence" value="ECO:0000250"/>
    <property type="project" value="AgBase"/>
</dbReference>
<dbReference type="GO" id="GO:0010628">
    <property type="term" value="P:positive regulation of gene expression"/>
    <property type="evidence" value="ECO:0000250"/>
    <property type="project" value="AgBase"/>
</dbReference>
<dbReference type="GO" id="GO:0070665">
    <property type="term" value="P:positive regulation of leukocyte proliferation"/>
    <property type="evidence" value="ECO:0000250"/>
    <property type="project" value="AgBase"/>
</dbReference>
<dbReference type="GO" id="GO:0050766">
    <property type="term" value="P:positive regulation of phagocytosis"/>
    <property type="evidence" value="ECO:0000250"/>
    <property type="project" value="AgBase"/>
</dbReference>
<dbReference type="GO" id="GO:1903428">
    <property type="term" value="P:positive regulation of reactive oxygen species biosynthetic process"/>
    <property type="evidence" value="ECO:0000250"/>
    <property type="project" value="AgBase"/>
</dbReference>
<dbReference type="GO" id="GO:0046427">
    <property type="term" value="P:positive regulation of receptor signaling pathway via JAK-STAT"/>
    <property type="evidence" value="ECO:0007669"/>
    <property type="project" value="TreeGrafter"/>
</dbReference>
<dbReference type="GO" id="GO:0060267">
    <property type="term" value="P:positive regulation of respiratory burst"/>
    <property type="evidence" value="ECO:0000250"/>
    <property type="project" value="AgBase"/>
</dbReference>
<dbReference type="GO" id="GO:0032930">
    <property type="term" value="P:positive regulation of superoxide anion generation"/>
    <property type="evidence" value="ECO:0000250"/>
    <property type="project" value="AgBase"/>
</dbReference>
<dbReference type="GO" id="GO:0002637">
    <property type="term" value="P:regulation of immunoglobulin production"/>
    <property type="evidence" value="ECO:0000250"/>
    <property type="project" value="AgBase"/>
</dbReference>
<dbReference type="GO" id="GO:0031667">
    <property type="term" value="P:response to nutrient levels"/>
    <property type="evidence" value="ECO:0007669"/>
    <property type="project" value="TreeGrafter"/>
</dbReference>
<dbReference type="FunFam" id="1.20.1250.10:FF:000037">
    <property type="entry name" value="Prolactin"/>
    <property type="match status" value="1"/>
</dbReference>
<dbReference type="Gene3D" id="1.20.1250.10">
    <property type="match status" value="1"/>
</dbReference>
<dbReference type="InterPro" id="IPR009079">
    <property type="entry name" value="4_helix_cytokine-like_core"/>
</dbReference>
<dbReference type="InterPro" id="IPR001400">
    <property type="entry name" value="Somatotropin/Prolactin"/>
</dbReference>
<dbReference type="InterPro" id="IPR018116">
    <property type="entry name" value="Somatotropin_CS"/>
</dbReference>
<dbReference type="PANTHER" id="PTHR11417:SF5">
    <property type="entry name" value="PROLACTIN"/>
    <property type="match status" value="1"/>
</dbReference>
<dbReference type="PANTHER" id="PTHR11417">
    <property type="entry name" value="SOMATOTROPIN,PROLACTIN"/>
    <property type="match status" value="1"/>
</dbReference>
<dbReference type="Pfam" id="PF00103">
    <property type="entry name" value="Hormone_1"/>
    <property type="match status" value="1"/>
</dbReference>
<dbReference type="PRINTS" id="PR00836">
    <property type="entry name" value="SOMATOTROPIN"/>
</dbReference>
<dbReference type="SUPFAM" id="SSF47266">
    <property type="entry name" value="4-helical cytokines"/>
    <property type="match status" value="1"/>
</dbReference>
<dbReference type="PROSITE" id="PS00266">
    <property type="entry name" value="SOMATOTROPIN_1"/>
    <property type="match status" value="1"/>
</dbReference>
<dbReference type="PROSITE" id="PS00338">
    <property type="entry name" value="SOMATOTROPIN_2"/>
    <property type="match status" value="1"/>
</dbReference>
<feature type="signal peptide" evidence="1">
    <location>
        <begin position="1"/>
        <end position="23"/>
    </location>
</feature>
<feature type="chain" id="PRO_0000032933" description="Prolactin">
    <location>
        <begin position="24"/>
        <end position="210"/>
    </location>
</feature>
<feature type="disulfide bond" evidence="1">
    <location>
        <begin position="69"/>
        <end position="183"/>
    </location>
</feature>
<feature type="disulfide bond" evidence="1">
    <location>
        <begin position="200"/>
        <end position="210"/>
    </location>
</feature>
<gene>
    <name type="primary">prl</name>
</gene>
<sequence length="210" mass="23406">MARRSQGTKLHLAVLCLVVSCHAIGLSDLMERASQRSDKLHSLSTSLTKDLDSHFPPMGRVMMPRPSMCHTSSLQTPKDKEQALRVSENELISLARSLLLAWNDPLLLLSSEAPTLPHPSNGDISSKIRELQDYSKSLGDGLDILVNKMGPSSQYISSIPFKGGDLGNDKTSRLINFHFLMSCFRRDSHKIDSFLKVLRCRATKMRPETC</sequence>
<reference key="1">
    <citation type="journal article" date="1993" name="Mol. Mar. Biol. Biotechnol.">
        <title>Molecular cloning and sequencing of omul prolactin cDNA.</title>
        <authorList>
            <person name="Trofimova I.N."/>
            <person name="Kuznedelov K.D."/>
            <person name="Kumarev V.P."/>
            <person name="Golovin S.Y."/>
        </authorList>
    </citation>
    <scope>NUCLEOTIDE SEQUENCE [MRNA]</scope>
    <source>
        <tissue>Pituitary</tissue>
    </source>
</reference>
<proteinExistence type="evidence at transcript level"/>
<organism>
    <name type="scientific">Coregonus autumnalis</name>
    <name type="common">Arctic cisco</name>
    <name type="synonym">Salmo autumnalis</name>
    <dbReference type="NCBI Taxonomy" id="27773"/>
    <lineage>
        <taxon>Eukaryota</taxon>
        <taxon>Metazoa</taxon>
        <taxon>Chordata</taxon>
        <taxon>Craniata</taxon>
        <taxon>Vertebrata</taxon>
        <taxon>Euteleostomi</taxon>
        <taxon>Actinopterygii</taxon>
        <taxon>Neopterygii</taxon>
        <taxon>Teleostei</taxon>
        <taxon>Protacanthopterygii</taxon>
        <taxon>Salmoniformes</taxon>
        <taxon>Salmonidae</taxon>
        <taxon>Coregoninae</taxon>
        <taxon>Coregonus</taxon>
    </lineage>
</organism>
<name>PRL_CORAU</name>